<comment type="similarity">
    <text evidence="1">Belongs to the TCL1 family.</text>
</comment>
<keyword id="KW-1185">Reference proteome</keyword>
<organism>
    <name type="scientific">Mus musculus</name>
    <name type="common">Mouse</name>
    <dbReference type="NCBI Taxonomy" id="10090"/>
    <lineage>
        <taxon>Eukaryota</taxon>
        <taxon>Metazoa</taxon>
        <taxon>Chordata</taxon>
        <taxon>Craniata</taxon>
        <taxon>Vertebrata</taxon>
        <taxon>Euteleostomi</taxon>
        <taxon>Mammalia</taxon>
        <taxon>Eutheria</taxon>
        <taxon>Euarchontoglires</taxon>
        <taxon>Glires</taxon>
        <taxon>Rodentia</taxon>
        <taxon>Myomorpha</taxon>
        <taxon>Muroidea</taxon>
        <taxon>Muridae</taxon>
        <taxon>Murinae</taxon>
        <taxon>Mus</taxon>
        <taxon>Mus</taxon>
    </lineage>
</organism>
<proteinExistence type="evidence at transcript level"/>
<sequence>MADSVHFPWMPFPPRFLVCTRDDIYEDENGRQWVVAKVETSRSPYGSRIETCITVHLQHMTTIPQEPTPQQPINNNSLPTMWRLESMNTYTGTDGTYWRLLDHSQMGDTLQLILDIVICEVD</sequence>
<name>TCLB3_MOUSE</name>
<gene>
    <name type="primary">Tcl1b3</name>
</gene>
<evidence type="ECO:0000305" key="1"/>
<protein>
    <recommendedName>
        <fullName>Protein TCL1B3</fullName>
    </recommendedName>
</protein>
<reference key="1">
    <citation type="journal article" date="1999" name="Proc. Natl. Acad. Sci. U.S.A.">
        <title>Genomic analysis of human and mouse TCL1 loci reveals a complex of tightly clustered genes.</title>
        <authorList>
            <person name="Hallas C."/>
            <person name="Pekarsky Y."/>
            <person name="Itoyama T."/>
            <person name="Varnum J."/>
            <person name="Bichi R."/>
            <person name="Rothstein J.L."/>
            <person name="Croce C.M."/>
        </authorList>
    </citation>
    <scope>NUCLEOTIDE SEQUENCE [MRNA]</scope>
</reference>
<dbReference type="EMBL" id="AF195490">
    <property type="protein sequence ID" value="AAF12803.1"/>
    <property type="molecule type" value="mRNA"/>
</dbReference>
<dbReference type="CCDS" id="CCDS36547.1"/>
<dbReference type="RefSeq" id="NP_038800.1">
    <property type="nucleotide sequence ID" value="NM_013772.2"/>
</dbReference>
<dbReference type="SMR" id="P56842"/>
<dbReference type="FunCoup" id="P56842">
    <property type="interactions" value="4"/>
</dbReference>
<dbReference type="STRING" id="10090.ENSMUSP00000088512"/>
<dbReference type="PaxDb" id="10090-ENSMUSP00000088512"/>
<dbReference type="DNASU" id="27378"/>
<dbReference type="Ensembl" id="ENSMUST00000090990.6">
    <property type="protein sequence ID" value="ENSMUSP00000088512.5"/>
    <property type="gene ID" value="ENSMUSG00000068940.8"/>
</dbReference>
<dbReference type="GeneID" id="27378"/>
<dbReference type="KEGG" id="mmu:27378"/>
<dbReference type="UCSC" id="uc007oya.1">
    <property type="organism name" value="mouse"/>
</dbReference>
<dbReference type="AGR" id="MGI:1351600"/>
<dbReference type="CTD" id="27378"/>
<dbReference type="MGI" id="MGI:1351600">
    <property type="gene designation" value="Tcl1b3"/>
</dbReference>
<dbReference type="VEuPathDB" id="HostDB:ENSMUSG00000068940"/>
<dbReference type="eggNOG" id="ENOG502TEDJ">
    <property type="taxonomic scope" value="Eukaryota"/>
</dbReference>
<dbReference type="GeneTree" id="ENSGT00390000006885"/>
<dbReference type="HOGENOM" id="CLU_168379_1_0_1"/>
<dbReference type="InParanoid" id="P56842"/>
<dbReference type="OrthoDB" id="9630488at2759"/>
<dbReference type="PhylomeDB" id="P56842"/>
<dbReference type="TreeFam" id="TF340217"/>
<dbReference type="BioGRID-ORCS" id="27378">
    <property type="hits" value="0 hits in 57 CRISPR screens"/>
</dbReference>
<dbReference type="ChiTaRS" id="Tcl1b3">
    <property type="organism name" value="mouse"/>
</dbReference>
<dbReference type="PRO" id="PR:P56842"/>
<dbReference type="Proteomes" id="UP000000589">
    <property type="component" value="Chromosome 12"/>
</dbReference>
<dbReference type="RNAct" id="P56842">
    <property type="molecule type" value="protein"/>
</dbReference>
<dbReference type="Bgee" id="ENSMUSG00000068940">
    <property type="expression patterns" value="Expressed in animal zygote and 122 other cell types or tissues"/>
</dbReference>
<dbReference type="ExpressionAtlas" id="P56842">
    <property type="expression patterns" value="baseline and differential"/>
</dbReference>
<dbReference type="GO" id="GO:0043539">
    <property type="term" value="F:protein serine/threonine kinase activator activity"/>
    <property type="evidence" value="ECO:0007669"/>
    <property type="project" value="InterPro"/>
</dbReference>
<dbReference type="FunFam" id="2.40.15.10:FF:000004">
    <property type="entry name" value="Protein TCL1B4"/>
    <property type="match status" value="1"/>
</dbReference>
<dbReference type="Gene3D" id="2.40.15.10">
    <property type="entry name" value="TCL1/MTCP1"/>
    <property type="match status" value="1"/>
</dbReference>
<dbReference type="InterPro" id="IPR004832">
    <property type="entry name" value="TCL1_MTCP1"/>
</dbReference>
<dbReference type="InterPro" id="IPR036672">
    <property type="entry name" value="TCL1_MTCP1_sf"/>
</dbReference>
<dbReference type="PANTHER" id="PTHR14060">
    <property type="entry name" value="PROTEIN P13 MTCP-1"/>
    <property type="match status" value="1"/>
</dbReference>
<dbReference type="PANTHER" id="PTHR14060:SF2">
    <property type="entry name" value="T-CELL LEUKEMIA_LYMPHOMA PROTEIN 1B"/>
    <property type="match status" value="1"/>
</dbReference>
<dbReference type="Pfam" id="PF01840">
    <property type="entry name" value="TCL1_MTCP1"/>
    <property type="match status" value="1"/>
</dbReference>
<dbReference type="SUPFAM" id="SSF50904">
    <property type="entry name" value="Oncogene products"/>
    <property type="match status" value="1"/>
</dbReference>
<accession>P56842</accession>
<feature type="chain" id="PRO_0000184493" description="Protein TCL1B3">
    <location>
        <begin position="1"/>
        <end position="122"/>
    </location>
</feature>